<organism>
    <name type="scientific">Synechococcus elongatus (strain ATCC 33912 / PCC 7942 / FACHB-805)</name>
    <name type="common">Anacystis nidulans R2</name>
    <dbReference type="NCBI Taxonomy" id="1140"/>
    <lineage>
        <taxon>Bacteria</taxon>
        <taxon>Bacillati</taxon>
        <taxon>Cyanobacteriota</taxon>
        <taxon>Cyanophyceae</taxon>
        <taxon>Synechococcales</taxon>
        <taxon>Synechococcaceae</taxon>
        <taxon>Synechococcus</taxon>
    </lineage>
</organism>
<reference key="1">
    <citation type="submission" date="2005-08" db="EMBL/GenBank/DDBJ databases">
        <title>Complete sequence of chromosome 1 of Synechococcus elongatus PCC 7942.</title>
        <authorList>
            <consortium name="US DOE Joint Genome Institute"/>
            <person name="Copeland A."/>
            <person name="Lucas S."/>
            <person name="Lapidus A."/>
            <person name="Barry K."/>
            <person name="Detter J.C."/>
            <person name="Glavina T."/>
            <person name="Hammon N."/>
            <person name="Israni S."/>
            <person name="Pitluck S."/>
            <person name="Schmutz J."/>
            <person name="Larimer F."/>
            <person name="Land M."/>
            <person name="Kyrpides N."/>
            <person name="Lykidis A."/>
            <person name="Golden S."/>
            <person name="Richardson P."/>
        </authorList>
    </citation>
    <scope>NUCLEOTIDE SEQUENCE [LARGE SCALE GENOMIC DNA]</scope>
    <source>
        <strain>ATCC 33912 / PCC 7942 / FACHB-805</strain>
    </source>
</reference>
<sequence>MNLRSLLASTPTQVLQPQHAALDLAITGLQTDSRRCQPGDLFLGMPGTQVDGGQFWPEAIAAGAVAVIVTPTALAQRPLSANPEACLILSDQMPVTAGAIAAAFYNQPAQTLKLIGVTGTNGKTTTTHLVEHFLNAADTKTALLGTLYNRWPGYSEVAQHTTPFATDLQAQLATAVDAGCQAAVMEVSSHALDQGRVNGCGFDVAVFTNLTQDHLDYHGTMEAYFAAKARLFAPPYLRGKAVINADDAYGQRLITMTPPGQCLTYSVVGTADFCTTDLQYGPTGVEGTIKTPDGAFPFRSPLVGQFNLANLLGAIAAGWTLGLPIETMLAVVPDFVGVPGRMERVVGQDSDPTVIVDYAHTPDSLENLLKAARPFIQGELICVFGCGGDRDRTKRPLMGEIAARLADRVIITSDNPRTEDPRQILADIVAGIPAASPVVVEADRAAAIRQAILSAQPGDGVLLAGKGHEDYQILGTTKIHFDDREQARLALAERQSA</sequence>
<comment type="function">
    <text evidence="1">Catalyzes the addition of meso-diaminopimelic acid to the nucleotide precursor UDP-N-acetylmuramoyl-L-alanyl-D-glutamate (UMAG) in the biosynthesis of bacterial cell-wall peptidoglycan.</text>
</comment>
<comment type="catalytic activity">
    <reaction evidence="1">
        <text>UDP-N-acetyl-alpha-D-muramoyl-L-alanyl-D-glutamate + meso-2,6-diaminopimelate + ATP = UDP-N-acetyl-alpha-D-muramoyl-L-alanyl-gamma-D-glutamyl-meso-2,6-diaminopimelate + ADP + phosphate + H(+)</text>
        <dbReference type="Rhea" id="RHEA:23676"/>
        <dbReference type="ChEBI" id="CHEBI:15378"/>
        <dbReference type="ChEBI" id="CHEBI:30616"/>
        <dbReference type="ChEBI" id="CHEBI:43474"/>
        <dbReference type="ChEBI" id="CHEBI:57791"/>
        <dbReference type="ChEBI" id="CHEBI:83900"/>
        <dbReference type="ChEBI" id="CHEBI:83905"/>
        <dbReference type="ChEBI" id="CHEBI:456216"/>
        <dbReference type="EC" id="6.3.2.13"/>
    </reaction>
</comment>
<comment type="cofactor">
    <cofactor evidence="1">
        <name>Mg(2+)</name>
        <dbReference type="ChEBI" id="CHEBI:18420"/>
    </cofactor>
</comment>
<comment type="pathway">
    <text evidence="1">Cell wall biogenesis; peptidoglycan biosynthesis.</text>
</comment>
<comment type="subcellular location">
    <subcellularLocation>
        <location evidence="1">Cytoplasm</location>
    </subcellularLocation>
</comment>
<comment type="PTM">
    <text evidence="1">Carboxylation is probably crucial for Mg(2+) binding and, consequently, for the gamma-phosphate positioning of ATP.</text>
</comment>
<comment type="similarity">
    <text evidence="1">Belongs to the MurCDEF family. MurE subfamily.</text>
</comment>
<protein>
    <recommendedName>
        <fullName evidence="1">UDP-N-acetylmuramoyl-L-alanyl-D-glutamate--2,6-diaminopimelate ligase</fullName>
        <ecNumber evidence="1">6.3.2.13</ecNumber>
    </recommendedName>
    <alternativeName>
        <fullName evidence="1">Meso-A2pm-adding enzyme</fullName>
    </alternativeName>
    <alternativeName>
        <fullName evidence="1">Meso-diaminopimelate-adding enzyme</fullName>
    </alternativeName>
    <alternativeName>
        <fullName evidence="1">UDP-MurNAc-L-Ala-D-Glu:meso-diaminopimelate ligase</fullName>
    </alternativeName>
    <alternativeName>
        <fullName evidence="1">UDP-MurNAc-tripeptide synthetase</fullName>
    </alternativeName>
    <alternativeName>
        <fullName evidence="1">UDP-N-acetylmuramyl-tripeptide synthetase</fullName>
    </alternativeName>
</protein>
<feature type="chain" id="PRO_1000012398" description="UDP-N-acetylmuramoyl-L-alanyl-D-glutamate--2,6-diaminopimelate ligase">
    <location>
        <begin position="1"/>
        <end position="497"/>
    </location>
</feature>
<feature type="short sequence motif" description="Meso-diaminopimelate recognition motif">
    <location>
        <begin position="414"/>
        <end position="417"/>
    </location>
</feature>
<feature type="binding site" evidence="1">
    <location>
        <position position="33"/>
    </location>
    <ligand>
        <name>UDP-N-acetyl-alpha-D-muramoyl-L-alanyl-D-glutamate</name>
        <dbReference type="ChEBI" id="CHEBI:83900"/>
    </ligand>
</feature>
<feature type="binding site" evidence="1">
    <location>
        <begin position="119"/>
        <end position="125"/>
    </location>
    <ligand>
        <name>ATP</name>
        <dbReference type="ChEBI" id="CHEBI:30616"/>
    </ligand>
</feature>
<feature type="binding site" evidence="1">
    <location>
        <begin position="161"/>
        <end position="162"/>
    </location>
    <ligand>
        <name>UDP-N-acetyl-alpha-D-muramoyl-L-alanyl-D-glutamate</name>
        <dbReference type="ChEBI" id="CHEBI:83900"/>
    </ligand>
</feature>
<feature type="binding site" evidence="1">
    <location>
        <position position="188"/>
    </location>
    <ligand>
        <name>UDP-N-acetyl-alpha-D-muramoyl-L-alanyl-D-glutamate</name>
        <dbReference type="ChEBI" id="CHEBI:83900"/>
    </ligand>
</feature>
<feature type="binding site" evidence="1">
    <location>
        <position position="194"/>
    </location>
    <ligand>
        <name>UDP-N-acetyl-alpha-D-muramoyl-L-alanyl-D-glutamate</name>
        <dbReference type="ChEBI" id="CHEBI:83900"/>
    </ligand>
</feature>
<feature type="binding site" evidence="1">
    <location>
        <position position="196"/>
    </location>
    <ligand>
        <name>UDP-N-acetyl-alpha-D-muramoyl-L-alanyl-D-glutamate</name>
        <dbReference type="ChEBI" id="CHEBI:83900"/>
    </ligand>
</feature>
<feature type="binding site" evidence="1">
    <location>
        <position position="390"/>
    </location>
    <ligand>
        <name>meso-2,6-diaminopimelate</name>
        <dbReference type="ChEBI" id="CHEBI:57791"/>
    </ligand>
</feature>
<feature type="binding site" evidence="1">
    <location>
        <begin position="414"/>
        <end position="417"/>
    </location>
    <ligand>
        <name>meso-2,6-diaminopimelate</name>
        <dbReference type="ChEBI" id="CHEBI:57791"/>
    </ligand>
</feature>
<feature type="binding site" evidence="1">
    <location>
        <position position="465"/>
    </location>
    <ligand>
        <name>meso-2,6-diaminopimelate</name>
        <dbReference type="ChEBI" id="CHEBI:57791"/>
    </ligand>
</feature>
<feature type="binding site" evidence="1">
    <location>
        <position position="469"/>
    </location>
    <ligand>
        <name>meso-2,6-diaminopimelate</name>
        <dbReference type="ChEBI" id="CHEBI:57791"/>
    </ligand>
</feature>
<feature type="modified residue" description="N6-carboxylysine" evidence="1">
    <location>
        <position position="228"/>
    </location>
</feature>
<keyword id="KW-0067">ATP-binding</keyword>
<keyword id="KW-0131">Cell cycle</keyword>
<keyword id="KW-0132">Cell division</keyword>
<keyword id="KW-0133">Cell shape</keyword>
<keyword id="KW-0961">Cell wall biogenesis/degradation</keyword>
<keyword id="KW-0963">Cytoplasm</keyword>
<keyword id="KW-0436">Ligase</keyword>
<keyword id="KW-0460">Magnesium</keyword>
<keyword id="KW-0547">Nucleotide-binding</keyword>
<keyword id="KW-0573">Peptidoglycan synthesis</keyword>
<keyword id="KW-1185">Reference proteome</keyword>
<name>MURE_SYNE7</name>
<dbReference type="EC" id="6.3.2.13" evidence="1"/>
<dbReference type="EMBL" id="CP000100">
    <property type="protein sequence ID" value="ABB57514.1"/>
    <property type="molecule type" value="Genomic_DNA"/>
</dbReference>
<dbReference type="RefSeq" id="WP_011378051.1">
    <property type="nucleotide sequence ID" value="NZ_JACJTX010000004.1"/>
</dbReference>
<dbReference type="SMR" id="Q31N55"/>
<dbReference type="STRING" id="1140.Synpcc7942_1484"/>
<dbReference type="PaxDb" id="1140-Synpcc7942_1484"/>
<dbReference type="KEGG" id="syf:Synpcc7942_1484"/>
<dbReference type="eggNOG" id="COG0769">
    <property type="taxonomic scope" value="Bacteria"/>
</dbReference>
<dbReference type="HOGENOM" id="CLU_022291_4_1_3"/>
<dbReference type="OrthoDB" id="9800958at2"/>
<dbReference type="BioCyc" id="SYNEL:SYNPCC7942_1484-MONOMER"/>
<dbReference type="UniPathway" id="UPA00219"/>
<dbReference type="Proteomes" id="UP000889800">
    <property type="component" value="Chromosome"/>
</dbReference>
<dbReference type="GO" id="GO:0005737">
    <property type="term" value="C:cytoplasm"/>
    <property type="evidence" value="ECO:0007669"/>
    <property type="project" value="UniProtKB-SubCell"/>
</dbReference>
<dbReference type="GO" id="GO:0005524">
    <property type="term" value="F:ATP binding"/>
    <property type="evidence" value="ECO:0007669"/>
    <property type="project" value="UniProtKB-UniRule"/>
</dbReference>
<dbReference type="GO" id="GO:0000287">
    <property type="term" value="F:magnesium ion binding"/>
    <property type="evidence" value="ECO:0007669"/>
    <property type="project" value="UniProtKB-UniRule"/>
</dbReference>
<dbReference type="GO" id="GO:0008765">
    <property type="term" value="F:UDP-N-acetylmuramoylalanyl-D-glutamate-2,6-diaminopimelate ligase activity"/>
    <property type="evidence" value="ECO:0007669"/>
    <property type="project" value="UniProtKB-UniRule"/>
</dbReference>
<dbReference type="GO" id="GO:0051301">
    <property type="term" value="P:cell division"/>
    <property type="evidence" value="ECO:0007669"/>
    <property type="project" value="UniProtKB-KW"/>
</dbReference>
<dbReference type="GO" id="GO:0071555">
    <property type="term" value="P:cell wall organization"/>
    <property type="evidence" value="ECO:0007669"/>
    <property type="project" value="UniProtKB-KW"/>
</dbReference>
<dbReference type="GO" id="GO:0009252">
    <property type="term" value="P:peptidoglycan biosynthetic process"/>
    <property type="evidence" value="ECO:0007669"/>
    <property type="project" value="UniProtKB-UniRule"/>
</dbReference>
<dbReference type="GO" id="GO:0008360">
    <property type="term" value="P:regulation of cell shape"/>
    <property type="evidence" value="ECO:0007669"/>
    <property type="project" value="UniProtKB-KW"/>
</dbReference>
<dbReference type="FunFam" id="3.90.190.20:FF:000006">
    <property type="entry name" value="UDP-N-acetylmuramoyl-L-alanyl-D-glutamate--2,6-diaminopimelate ligase"/>
    <property type="match status" value="1"/>
</dbReference>
<dbReference type="Gene3D" id="3.90.190.20">
    <property type="entry name" value="Mur ligase, C-terminal domain"/>
    <property type="match status" value="1"/>
</dbReference>
<dbReference type="Gene3D" id="3.40.1190.10">
    <property type="entry name" value="Mur-like, catalytic domain"/>
    <property type="match status" value="1"/>
</dbReference>
<dbReference type="Gene3D" id="3.40.1390.10">
    <property type="entry name" value="MurE/MurF, N-terminal domain"/>
    <property type="match status" value="1"/>
</dbReference>
<dbReference type="HAMAP" id="MF_00208">
    <property type="entry name" value="MurE"/>
    <property type="match status" value="1"/>
</dbReference>
<dbReference type="InterPro" id="IPR036565">
    <property type="entry name" value="Mur-like_cat_sf"/>
</dbReference>
<dbReference type="InterPro" id="IPR004101">
    <property type="entry name" value="Mur_ligase_C"/>
</dbReference>
<dbReference type="InterPro" id="IPR036615">
    <property type="entry name" value="Mur_ligase_C_dom_sf"/>
</dbReference>
<dbReference type="InterPro" id="IPR013221">
    <property type="entry name" value="Mur_ligase_cen"/>
</dbReference>
<dbReference type="InterPro" id="IPR000713">
    <property type="entry name" value="Mur_ligase_N"/>
</dbReference>
<dbReference type="InterPro" id="IPR035911">
    <property type="entry name" value="MurE/MurF_N"/>
</dbReference>
<dbReference type="InterPro" id="IPR005761">
    <property type="entry name" value="UDP-N-AcMur-Glu-dNH2Pim_ligase"/>
</dbReference>
<dbReference type="NCBIfam" id="TIGR01085">
    <property type="entry name" value="murE"/>
    <property type="match status" value="1"/>
</dbReference>
<dbReference type="NCBIfam" id="NF001124">
    <property type="entry name" value="PRK00139.1-2"/>
    <property type="match status" value="1"/>
</dbReference>
<dbReference type="NCBIfam" id="NF001126">
    <property type="entry name" value="PRK00139.1-4"/>
    <property type="match status" value="1"/>
</dbReference>
<dbReference type="PANTHER" id="PTHR23135">
    <property type="entry name" value="MUR LIGASE FAMILY MEMBER"/>
    <property type="match status" value="1"/>
</dbReference>
<dbReference type="PANTHER" id="PTHR23135:SF4">
    <property type="entry name" value="UDP-N-ACETYLMURAMOYL-L-ALANYL-D-GLUTAMATE--2,6-DIAMINOPIMELATE LIGASE MURE HOMOLOG, CHLOROPLASTIC"/>
    <property type="match status" value="1"/>
</dbReference>
<dbReference type="Pfam" id="PF01225">
    <property type="entry name" value="Mur_ligase"/>
    <property type="match status" value="1"/>
</dbReference>
<dbReference type="Pfam" id="PF02875">
    <property type="entry name" value="Mur_ligase_C"/>
    <property type="match status" value="1"/>
</dbReference>
<dbReference type="Pfam" id="PF08245">
    <property type="entry name" value="Mur_ligase_M"/>
    <property type="match status" value="1"/>
</dbReference>
<dbReference type="SUPFAM" id="SSF53623">
    <property type="entry name" value="MurD-like peptide ligases, catalytic domain"/>
    <property type="match status" value="1"/>
</dbReference>
<dbReference type="SUPFAM" id="SSF53244">
    <property type="entry name" value="MurD-like peptide ligases, peptide-binding domain"/>
    <property type="match status" value="1"/>
</dbReference>
<dbReference type="SUPFAM" id="SSF63418">
    <property type="entry name" value="MurE/MurF N-terminal domain"/>
    <property type="match status" value="1"/>
</dbReference>
<evidence type="ECO:0000255" key="1">
    <source>
        <dbReference type="HAMAP-Rule" id="MF_00208"/>
    </source>
</evidence>
<accession>Q31N55</accession>
<gene>
    <name evidence="1" type="primary">murE</name>
    <name type="ordered locus">Synpcc7942_1484</name>
</gene>
<proteinExistence type="inferred from homology"/>